<organism>
    <name type="scientific">Yersinia pseudotuberculosis serotype I (strain IP32953)</name>
    <dbReference type="NCBI Taxonomy" id="273123"/>
    <lineage>
        <taxon>Bacteria</taxon>
        <taxon>Pseudomonadati</taxon>
        <taxon>Pseudomonadota</taxon>
        <taxon>Gammaproteobacteria</taxon>
        <taxon>Enterobacterales</taxon>
        <taxon>Yersiniaceae</taxon>
        <taxon>Yersinia</taxon>
    </lineage>
</organism>
<proteinExistence type="inferred from homology"/>
<gene>
    <name type="primary">efeO</name>
    <name type="ordered locus">YPTB1726</name>
</gene>
<feature type="signal peptide" evidence="2">
    <location>
        <begin position="1"/>
        <end position="27"/>
    </location>
</feature>
<feature type="chain" id="PRO_5000098673" description="Iron uptake system component EfeO">
    <location>
        <begin position="28"/>
        <end position="374"/>
    </location>
</feature>
<accession>Q66BP5</accession>
<reference key="1">
    <citation type="journal article" date="2004" name="Proc. Natl. Acad. Sci. U.S.A.">
        <title>Insights into the evolution of Yersinia pestis through whole-genome comparison with Yersinia pseudotuberculosis.</title>
        <authorList>
            <person name="Chain P.S.G."/>
            <person name="Carniel E."/>
            <person name="Larimer F.W."/>
            <person name="Lamerdin J."/>
            <person name="Stoutland P.O."/>
            <person name="Regala W.M."/>
            <person name="Georgescu A.M."/>
            <person name="Vergez L.M."/>
            <person name="Land M.L."/>
            <person name="Motin V.L."/>
            <person name="Brubaker R.R."/>
            <person name="Fowler J."/>
            <person name="Hinnebusch J."/>
            <person name="Marceau M."/>
            <person name="Medigue C."/>
            <person name="Simonet M."/>
            <person name="Chenal-Francisque V."/>
            <person name="Souza B."/>
            <person name="Dacheux D."/>
            <person name="Elliott J.M."/>
            <person name="Derbise A."/>
            <person name="Hauser L.J."/>
            <person name="Garcia E."/>
        </authorList>
    </citation>
    <scope>NUCLEOTIDE SEQUENCE [LARGE SCALE GENOMIC DNA]</scope>
    <source>
        <strain>IP32953</strain>
    </source>
</reference>
<sequence>MSIWFFRRTALHAALLSLPAFAISAQAADIPQVKITVNDKQCEPMALTVPAGKTQFIVHNVSQKGLEWEILKGVMVVEERENIAPGFTQKMTANLEPGEYDMTCGLLSNPKGKLTVAAGEQAPVKPDAMALVGPIAEYKVYVTQEVAQLVSQTKAFTDAVKAGDLALARKLYAPTRQHYERIEPIAELFSDLDGSIDAREDDFEQKSADPKFTGFHRLEKILFGDNTTKGADKFADLLYQDTLELQKRIAGLTFAPNKVVGGAAGLIEEVAASKISGEEDRYSRTDLWDFQANVDGAQKIVNLLRPLLEKADKPLLQKIDANFNTVDSVLAKYRTKEGYESYEKLTDADRNAMKGPITALAEDLAQLRGVLGLD</sequence>
<keyword id="KW-0574">Periplasm</keyword>
<keyword id="KW-0732">Signal</keyword>
<comment type="function">
    <text evidence="1">Involved in Fe(2+) uptake. Could be an iron-binding and/or electron-transfer component (By similarity).</text>
</comment>
<comment type="subunit">
    <text evidence="1">Monomer. Part of a ferrous iron transporter composed of EfeU, EfeO and EfeB (By similarity).</text>
</comment>
<comment type="subcellular location">
    <subcellularLocation>
        <location evidence="1">Periplasm</location>
    </subcellularLocation>
</comment>
<comment type="similarity">
    <text evidence="3">Belongs to the EfeM/EfeO family.</text>
</comment>
<dbReference type="EMBL" id="BX936398">
    <property type="protein sequence ID" value="CAH20965.1"/>
    <property type="molecule type" value="Genomic_DNA"/>
</dbReference>
<dbReference type="RefSeq" id="WP_011192193.1">
    <property type="nucleotide sequence ID" value="NC_006155.1"/>
</dbReference>
<dbReference type="SMR" id="Q66BP5"/>
<dbReference type="KEGG" id="ypo:BZ17_774"/>
<dbReference type="KEGG" id="yps:YPTB1726"/>
<dbReference type="PATRIC" id="fig|273123.14.peg.819"/>
<dbReference type="Proteomes" id="UP000001011">
    <property type="component" value="Chromosome"/>
</dbReference>
<dbReference type="GO" id="GO:0042597">
    <property type="term" value="C:periplasmic space"/>
    <property type="evidence" value="ECO:0007669"/>
    <property type="project" value="UniProtKB-SubCell"/>
</dbReference>
<dbReference type="CDD" id="cd04203">
    <property type="entry name" value="Cupredoxin_like_3"/>
    <property type="match status" value="1"/>
</dbReference>
<dbReference type="CDD" id="cd14656">
    <property type="entry name" value="Imelysin-like_EfeO"/>
    <property type="match status" value="1"/>
</dbReference>
<dbReference type="Gene3D" id="2.60.40.420">
    <property type="entry name" value="Cupredoxins - blue copper proteins"/>
    <property type="match status" value="1"/>
</dbReference>
<dbReference type="Gene3D" id="1.20.1420.20">
    <property type="entry name" value="M75 peptidase, HXXE motif"/>
    <property type="match status" value="1"/>
</dbReference>
<dbReference type="InterPro" id="IPR008972">
    <property type="entry name" value="Cupredoxin"/>
</dbReference>
<dbReference type="InterPro" id="IPR050894">
    <property type="entry name" value="EfeM/EfeO_iron_uptake"/>
</dbReference>
<dbReference type="InterPro" id="IPR028096">
    <property type="entry name" value="EfeO_Cupredoxin"/>
</dbReference>
<dbReference type="InterPro" id="IPR018976">
    <property type="entry name" value="Imelysin-like"/>
</dbReference>
<dbReference type="InterPro" id="IPR034981">
    <property type="entry name" value="Imelysin-like_EfeO/Algp7"/>
</dbReference>
<dbReference type="InterPro" id="IPR038352">
    <property type="entry name" value="Imelysin_sf"/>
</dbReference>
<dbReference type="InterPro" id="IPR053377">
    <property type="entry name" value="Iron_uptake_EfeM/EfeO"/>
</dbReference>
<dbReference type="NCBIfam" id="NF041757">
    <property type="entry name" value="EfeO"/>
    <property type="match status" value="1"/>
</dbReference>
<dbReference type="NCBIfam" id="NF007697">
    <property type="entry name" value="PRK10378.1"/>
    <property type="match status" value="1"/>
</dbReference>
<dbReference type="PANTHER" id="PTHR39192">
    <property type="entry name" value="IRON UPTAKE SYSTEM COMPONENT EFEO"/>
    <property type="match status" value="1"/>
</dbReference>
<dbReference type="PANTHER" id="PTHR39192:SF1">
    <property type="entry name" value="IRON UPTAKE SYSTEM COMPONENT EFEO"/>
    <property type="match status" value="1"/>
</dbReference>
<dbReference type="Pfam" id="PF13473">
    <property type="entry name" value="Cupredoxin_1"/>
    <property type="match status" value="1"/>
</dbReference>
<dbReference type="Pfam" id="PF09375">
    <property type="entry name" value="Peptidase_M75"/>
    <property type="match status" value="1"/>
</dbReference>
<dbReference type="SUPFAM" id="SSF49503">
    <property type="entry name" value="Cupredoxins"/>
    <property type="match status" value="1"/>
</dbReference>
<name>EFEO_YERPS</name>
<protein>
    <recommendedName>
        <fullName>Iron uptake system component EfeO</fullName>
    </recommendedName>
</protein>
<evidence type="ECO:0000250" key="1"/>
<evidence type="ECO:0000255" key="2"/>
<evidence type="ECO:0000305" key="3"/>